<proteinExistence type="evidence at transcript level"/>
<dbReference type="EC" id="2.1.1.321" evidence="2"/>
<dbReference type="EMBL" id="AJ720865">
    <property type="protein sequence ID" value="CAG32524.1"/>
    <property type="molecule type" value="mRNA"/>
</dbReference>
<dbReference type="RefSeq" id="NP_001005831.1">
    <property type="nucleotide sequence ID" value="NM_001005831.1"/>
</dbReference>
<dbReference type="SMR" id="Q5ZIB9"/>
<dbReference type="FunCoup" id="Q5ZIB9">
    <property type="interactions" value="3052"/>
</dbReference>
<dbReference type="STRING" id="9031.ENSGALP00000071227"/>
<dbReference type="PaxDb" id="9031-ENSGALP00000001157"/>
<dbReference type="GeneID" id="415620"/>
<dbReference type="KEGG" id="gga:415620"/>
<dbReference type="CTD" id="54496"/>
<dbReference type="VEuPathDB" id="HostDB:geneid_415620"/>
<dbReference type="eggNOG" id="KOG1501">
    <property type="taxonomic scope" value="Eukaryota"/>
</dbReference>
<dbReference type="InParanoid" id="Q5ZIB9"/>
<dbReference type="OrthoDB" id="412876at2759"/>
<dbReference type="PhylomeDB" id="Q5ZIB9"/>
<dbReference type="PRO" id="PR:Q5ZIB9"/>
<dbReference type="Proteomes" id="UP000000539">
    <property type="component" value="Unassembled WGS sequence"/>
</dbReference>
<dbReference type="GO" id="GO:0005829">
    <property type="term" value="C:cytosol"/>
    <property type="evidence" value="ECO:0000250"/>
    <property type="project" value="UniProtKB"/>
</dbReference>
<dbReference type="GO" id="GO:0005634">
    <property type="term" value="C:nucleus"/>
    <property type="evidence" value="ECO:0000250"/>
    <property type="project" value="UniProtKB"/>
</dbReference>
<dbReference type="GO" id="GO:0140939">
    <property type="term" value="F:histone H4 methyltransferase activity"/>
    <property type="evidence" value="ECO:0000250"/>
    <property type="project" value="HGNC-UCL"/>
</dbReference>
<dbReference type="GO" id="GO:0044020">
    <property type="term" value="F:histone H4R3 methyltransferase activity"/>
    <property type="evidence" value="ECO:0000250"/>
    <property type="project" value="UniProtKB"/>
</dbReference>
<dbReference type="GO" id="GO:0042054">
    <property type="term" value="F:histone methyltransferase activity"/>
    <property type="evidence" value="ECO:0000318"/>
    <property type="project" value="GO_Central"/>
</dbReference>
<dbReference type="GO" id="GO:0016274">
    <property type="term" value="F:protein-arginine N-methyltransferase activity"/>
    <property type="evidence" value="ECO:0000318"/>
    <property type="project" value="GO_Central"/>
</dbReference>
<dbReference type="GO" id="GO:0035241">
    <property type="term" value="F:protein-arginine omega-N monomethyltransferase activity"/>
    <property type="evidence" value="ECO:0000250"/>
    <property type="project" value="HGNC-UCL"/>
</dbReference>
<dbReference type="GO" id="GO:0035243">
    <property type="term" value="F:protein-arginine omega-N symmetric methyltransferase activity"/>
    <property type="evidence" value="ECO:0000250"/>
    <property type="project" value="HGNC-UCL"/>
</dbReference>
<dbReference type="GO" id="GO:0008757">
    <property type="term" value="F:S-adenosylmethionine-dependent methyltransferase activity"/>
    <property type="evidence" value="ECO:0000250"/>
    <property type="project" value="HGNC-UCL"/>
</dbReference>
<dbReference type="GO" id="GO:0006338">
    <property type="term" value="P:chromatin remodeling"/>
    <property type="evidence" value="ECO:0000318"/>
    <property type="project" value="GO_Central"/>
</dbReference>
<dbReference type="GO" id="GO:0071514">
    <property type="term" value="P:genomic imprinting"/>
    <property type="evidence" value="ECO:0000250"/>
    <property type="project" value="UniProtKB"/>
</dbReference>
<dbReference type="GO" id="GO:0032259">
    <property type="term" value="P:methylation"/>
    <property type="evidence" value="ECO:0007669"/>
    <property type="project" value="UniProtKB-KW"/>
</dbReference>
<dbReference type="GO" id="GO:0006355">
    <property type="term" value="P:regulation of DNA-templated transcription"/>
    <property type="evidence" value="ECO:0000318"/>
    <property type="project" value="GO_Central"/>
</dbReference>
<dbReference type="GO" id="GO:0000387">
    <property type="term" value="P:spliceosomal snRNP assembly"/>
    <property type="evidence" value="ECO:0000250"/>
    <property type="project" value="UniProtKB"/>
</dbReference>
<dbReference type="CDD" id="cd02440">
    <property type="entry name" value="AdoMet_MTases"/>
    <property type="match status" value="1"/>
</dbReference>
<dbReference type="FunFam" id="2.70.160.11:FF:000010">
    <property type="entry name" value="Protein arginine N-methyltransferase"/>
    <property type="match status" value="1"/>
</dbReference>
<dbReference type="FunFam" id="2.70.160.11:FF:000004">
    <property type="entry name" value="Protein arginine N-methyltransferase 7"/>
    <property type="match status" value="1"/>
</dbReference>
<dbReference type="FunFam" id="3.40.50.150:FF:000070">
    <property type="entry name" value="Protein arginine N-methyltransferase 7"/>
    <property type="match status" value="1"/>
</dbReference>
<dbReference type="FunFam" id="3.40.50.150:FF:000071">
    <property type="entry name" value="Protein arginine N-methyltransferase 7"/>
    <property type="match status" value="1"/>
</dbReference>
<dbReference type="Gene3D" id="2.70.160.11">
    <property type="entry name" value="Hnrnp arginine n-methyltransferase1"/>
    <property type="match status" value="2"/>
</dbReference>
<dbReference type="Gene3D" id="3.40.50.150">
    <property type="entry name" value="Vaccinia Virus protein VP39"/>
    <property type="match status" value="2"/>
</dbReference>
<dbReference type="InterPro" id="IPR025799">
    <property type="entry name" value="Arg_MeTrfase"/>
</dbReference>
<dbReference type="InterPro" id="IPR014644">
    <property type="entry name" value="MeTrfase_PRMT7"/>
</dbReference>
<dbReference type="InterPro" id="IPR055135">
    <property type="entry name" value="PRMT_dom"/>
</dbReference>
<dbReference type="InterPro" id="IPR029063">
    <property type="entry name" value="SAM-dependent_MTases_sf"/>
</dbReference>
<dbReference type="PANTHER" id="PTHR11006">
    <property type="entry name" value="PROTEIN ARGININE N-METHYLTRANSFERASE"/>
    <property type="match status" value="1"/>
</dbReference>
<dbReference type="PANTHER" id="PTHR11006:SF4">
    <property type="entry name" value="PROTEIN ARGININE N-METHYLTRANSFERASE 7"/>
    <property type="match status" value="1"/>
</dbReference>
<dbReference type="Pfam" id="PF06325">
    <property type="entry name" value="PrmA"/>
    <property type="match status" value="1"/>
</dbReference>
<dbReference type="Pfam" id="PF22528">
    <property type="entry name" value="PRMT_C"/>
    <property type="match status" value="2"/>
</dbReference>
<dbReference type="PIRSF" id="PIRSF036946">
    <property type="entry name" value="Arg_N-mtase"/>
    <property type="match status" value="1"/>
</dbReference>
<dbReference type="SUPFAM" id="SSF53335">
    <property type="entry name" value="S-adenosyl-L-methionine-dependent methyltransferases"/>
    <property type="match status" value="2"/>
</dbReference>
<dbReference type="PROSITE" id="PS51678">
    <property type="entry name" value="SAM_MT_PRMT"/>
    <property type="match status" value="2"/>
</dbReference>
<comment type="function">
    <text evidence="2">Arginine methyltransferase that can both catalyze the formation of omega-N monomethylarginine (MMA) and symmetrical dimethylarginine (sDMA), with a preference for the formation of MMA. Specifically mediates the symmetrical dimethylation of arginine residues in the small nuclear ribonucleoproteins Sm D1 (SNRPD1) and Sm D3 (SNRPD3); such methylation being required for the assembly and biogenesis of snRNP core particles. Specifically mediates the symmetric dimethylation of histone H4 'Arg-3' to form H4R3me2s. Plays a role in gene imprinting by being recruited by CTCFL at the H19 imprinted control region (ICR) and methylating histone H4 to form H4R3me2s, possibly leading to recruit DNA methyltransferases at these sites. May also play a role in embryonic stem cell (ESC) pluripotency. Also able to mediate the arginine methylation of histone H2A and myelin basic protein (MBP) in vitro; the relevance of such results is however unclear in vivo.</text>
</comment>
<comment type="catalytic activity">
    <reaction evidence="2">
        <text>L-arginyl-[protein] + S-adenosyl-L-methionine = N(omega)-methyl-L-arginyl-[protein] + S-adenosyl-L-homocysteine + H(+)</text>
        <dbReference type="Rhea" id="RHEA:48100"/>
        <dbReference type="Rhea" id="RHEA-COMP:10532"/>
        <dbReference type="Rhea" id="RHEA-COMP:11990"/>
        <dbReference type="ChEBI" id="CHEBI:15378"/>
        <dbReference type="ChEBI" id="CHEBI:29965"/>
        <dbReference type="ChEBI" id="CHEBI:57856"/>
        <dbReference type="ChEBI" id="CHEBI:59789"/>
        <dbReference type="ChEBI" id="CHEBI:65280"/>
        <dbReference type="EC" id="2.1.1.321"/>
    </reaction>
</comment>
<comment type="subcellular location">
    <subcellularLocation>
        <location evidence="1">Cytoplasm</location>
        <location evidence="1">Cytosol</location>
    </subcellularLocation>
    <subcellularLocation>
        <location evidence="1">Nucleus</location>
    </subcellularLocation>
</comment>
<comment type="similarity">
    <text evidence="3">Belongs to the class I-like SAM-binding methyltransferase superfamily. Protein arginine N-methyltransferase family. PRMT7 subfamily.</text>
</comment>
<evidence type="ECO:0000250" key="1"/>
<evidence type="ECO:0000250" key="2">
    <source>
        <dbReference type="UniProtKB" id="Q9NVM4"/>
    </source>
</evidence>
<evidence type="ECO:0000255" key="3">
    <source>
        <dbReference type="PROSITE-ProRule" id="PRU01015"/>
    </source>
</evidence>
<sequence length="689" mass="78071">MKTFCGRANPTTGSLEWVEEDEDYDYHQEIARSRYADMLHDKDRNMKYYQGIRAAVSRVKGRGEKAIVLDIGTGTGLLSMMAASAGADFCYAVEVFKPMANAAVKIVEKNGFGDKIKVINKHSTEVTVGPDGDMQCRANILVTELFDTELIGEGALPTYEHAHKYLVQEGCEAVPHRATVYVQLVESKRMWSWNKLFPVHVEAEDGEKIIVSPSEMENCPGVPSVCDIQLNQMPSSDFTILSDVVTMFSVDFSKPVRSASTCYRAQLDPVKSGKAQIVLSWWDIDMDPSGTINCTMAPYWVKPMSAFQWRDHWMQCVYFLPKEEQVLQGEKVHLTACRDEYSVWYTLQKAREEDESKADARVESPVCRCQAHLLWNRPRFGELNDQNRTRQYIKSLMSVLRTDSVCLCISDGSLLPVLAHYLGAEQVFTLENSAVSCSVMKKFFKANHLEDKIKIVEARPELLTSSHLEEKKISVLVGEPFFTTSLLPWHNLYFWYARTAVTEHLASDVTVLPQSAALHMMIVEFQDLWRIRSPCGTCEGFDVQTMDDMIKNSLNFRESKEAEPHPLWEYPCKSLSNPQEVLLFDFRKTVPQHCLSTEGSVNLLRKGKSHGAVLWMEYHLTADISVSTGLMQISNEKGNCEWNPHCKQAVYFFSSVIESETLADVPTAVTYAIKFDTKTGEIAMDFKLL</sequence>
<gene>
    <name type="primary">PRMT7</name>
    <name type="ORF">RCJMB04_28e13</name>
</gene>
<protein>
    <recommendedName>
        <fullName>Protein arginine N-methyltransferase 7</fullName>
        <ecNumber evidence="2">2.1.1.321</ecNumber>
    </recommendedName>
    <alternativeName>
        <fullName>Histone-arginine N-methyltransferase PRMT7</fullName>
    </alternativeName>
    <alternativeName>
        <fullName>[Myelin basic protein]-arginine N-methyltransferase PRMT7</fullName>
    </alternativeName>
</protein>
<name>ANM7_CHICK</name>
<reference key="1">
    <citation type="journal article" date="2005" name="Genome Biol.">
        <title>Full-length cDNAs from chicken bursal lymphocytes to facilitate gene function analysis.</title>
        <authorList>
            <person name="Caldwell R.B."/>
            <person name="Kierzek A.M."/>
            <person name="Arakawa H."/>
            <person name="Bezzubov Y."/>
            <person name="Zaim J."/>
            <person name="Fiedler P."/>
            <person name="Kutter S."/>
            <person name="Blagodatski A."/>
            <person name="Kostovska D."/>
            <person name="Koter M."/>
            <person name="Plachy J."/>
            <person name="Carninci P."/>
            <person name="Hayashizaki Y."/>
            <person name="Buerstedde J.-M."/>
        </authorList>
    </citation>
    <scope>NUCLEOTIDE SEQUENCE [LARGE SCALE MRNA]</scope>
    <source>
        <strain>CB</strain>
        <tissue>Bursa of Fabricius</tissue>
    </source>
</reference>
<keyword id="KW-0156">Chromatin regulator</keyword>
<keyword id="KW-0963">Cytoplasm</keyword>
<keyword id="KW-0221">Differentiation</keyword>
<keyword id="KW-0489">Methyltransferase</keyword>
<keyword id="KW-0539">Nucleus</keyword>
<keyword id="KW-1185">Reference proteome</keyword>
<keyword id="KW-0677">Repeat</keyword>
<keyword id="KW-0949">S-adenosyl-L-methionine</keyword>
<keyword id="KW-0804">Transcription</keyword>
<keyword id="KW-0805">Transcription regulation</keyword>
<keyword id="KW-0808">Transferase</keyword>
<organism>
    <name type="scientific">Gallus gallus</name>
    <name type="common">Chicken</name>
    <dbReference type="NCBI Taxonomy" id="9031"/>
    <lineage>
        <taxon>Eukaryota</taxon>
        <taxon>Metazoa</taxon>
        <taxon>Chordata</taxon>
        <taxon>Craniata</taxon>
        <taxon>Vertebrata</taxon>
        <taxon>Euteleostomi</taxon>
        <taxon>Archelosauria</taxon>
        <taxon>Archosauria</taxon>
        <taxon>Dinosauria</taxon>
        <taxon>Saurischia</taxon>
        <taxon>Theropoda</taxon>
        <taxon>Coelurosauria</taxon>
        <taxon>Aves</taxon>
        <taxon>Neognathae</taxon>
        <taxon>Galloanserae</taxon>
        <taxon>Galliformes</taxon>
        <taxon>Phasianidae</taxon>
        <taxon>Phasianinae</taxon>
        <taxon>Gallus</taxon>
    </lineage>
</organism>
<accession>Q5ZIB9</accession>
<feature type="chain" id="PRO_0000373903" description="Protein arginine N-methyltransferase 7">
    <location>
        <begin position="1"/>
        <end position="689"/>
    </location>
</feature>
<feature type="domain" description="SAM-dependent MTase PRMT-type 1" evidence="3">
    <location>
        <begin position="14"/>
        <end position="344"/>
    </location>
</feature>
<feature type="domain" description="SAM-dependent MTase PRMT-type 2" evidence="3">
    <location>
        <begin position="359"/>
        <end position="685"/>
    </location>
</feature>
<feature type="active site" evidence="1">
    <location>
        <position position="144"/>
    </location>
</feature>
<feature type="active site" evidence="1">
    <location>
        <position position="153"/>
    </location>
</feature>